<dbReference type="GO" id="GO:0005576">
    <property type="term" value="C:extracellular region"/>
    <property type="evidence" value="ECO:0007669"/>
    <property type="project" value="UniProtKB-SubCell"/>
</dbReference>
<dbReference type="GO" id="GO:0090729">
    <property type="term" value="F:toxin activity"/>
    <property type="evidence" value="ECO:0007669"/>
    <property type="project" value="UniProtKB-KW"/>
</dbReference>
<dbReference type="GO" id="GO:0042742">
    <property type="term" value="P:defense response to bacterium"/>
    <property type="evidence" value="ECO:0007669"/>
    <property type="project" value="InterPro"/>
</dbReference>
<dbReference type="InterPro" id="IPR035164">
    <property type="entry name" value="Cupiennin"/>
</dbReference>
<dbReference type="Pfam" id="PF17563">
    <property type="entry name" value="Cu"/>
    <property type="match status" value="1"/>
</dbReference>
<proteinExistence type="evidence at protein level"/>
<protein>
    <recommendedName>
        <fullName evidence="2">Short cationic peptide-1c</fullName>
        <shortName evidence="2">SCP-1c</shortName>
    </recommendedName>
    <alternativeName>
        <fullName evidence="2">Cupiennin 1-like peptide-1c</fullName>
    </alternativeName>
    <alternativeName>
        <fullName evidence="3">Truncated variant of Cupiennin 1 family</fullName>
    </alternativeName>
</protein>
<keyword id="KW-0027">Amidation</keyword>
<keyword id="KW-0903">Direct protein sequencing</keyword>
<keyword id="KW-0964">Secreted</keyword>
<keyword id="KW-0800">Toxin</keyword>
<feature type="peptide" id="PRO_0000421202" description="Short cationic peptide-1c" evidence="1">
    <location>
        <begin position="1"/>
        <end position="28"/>
    </location>
</feature>
<feature type="modified residue" description="Glutamic acid 1-amide" evidence="1">
    <location>
        <position position="28"/>
    </location>
</feature>
<reference key="1">
    <citation type="journal article" date="2012" name="FEBS J.">
        <title>Multicomponent venom of the spider Cupiennius salei: a bioanalytical investigation applying different strategies.</title>
        <authorList>
            <person name="Trachsel C."/>
            <person name="Siegemund D."/>
            <person name="Kampfer U."/>
            <person name="Kopp L.S."/>
            <person name="Buhr C."/>
            <person name="Grossmann J."/>
            <person name="Luthi C."/>
            <person name="Cunningham M."/>
            <person name="Nentwig W."/>
            <person name="Kuhn-Nentwig L."/>
            <person name="Schurch S."/>
            <person name="Schaller J."/>
        </authorList>
    </citation>
    <scope>PROTEIN SEQUENCE</scope>
    <scope>MASS SPECTROMETRY</scope>
    <scope>AMIDATION AT GLU-28</scope>
    <source>
        <tissue>Venom</tissue>
    </source>
</reference>
<organism>
    <name type="scientific">Cupiennius salei</name>
    <name type="common">American wandering spider</name>
    <dbReference type="NCBI Taxonomy" id="6928"/>
    <lineage>
        <taxon>Eukaryota</taxon>
        <taxon>Metazoa</taxon>
        <taxon>Ecdysozoa</taxon>
        <taxon>Arthropoda</taxon>
        <taxon>Chelicerata</taxon>
        <taxon>Arachnida</taxon>
        <taxon>Araneae</taxon>
        <taxon>Araneomorphae</taxon>
        <taxon>Entelegynae</taxon>
        <taxon>Lycosoidea</taxon>
        <taxon>Ctenidae</taxon>
        <taxon>Cupiennius</taxon>
    </lineage>
</organism>
<sequence>FLAKKVAKTVAKQAAKQGAKYIANKQTE</sequence>
<accession>B3EWU3</accession>
<name>TXS1C_CUPSA</name>
<evidence type="ECO:0000269" key="1">
    <source>
    </source>
</evidence>
<evidence type="ECO:0000303" key="2">
    <source>
    </source>
</evidence>
<evidence type="ECO:0000305" key="3"/>
<evidence type="ECO:0000305" key="4">
    <source>
    </source>
</evidence>
<comment type="subcellular location">
    <subcellularLocation>
        <location evidence="1">Secreted</location>
    </subcellularLocation>
</comment>
<comment type="tissue specificity">
    <text evidence="4">Expressed by the venom gland.</text>
</comment>
<comment type="mass spectrometry"/>
<comment type="similarity">
    <text evidence="3">Belongs to the cationic peptide 04 (cupiennin) family. 01 subfamily.</text>
</comment>